<evidence type="ECO:0000255" key="1">
    <source>
        <dbReference type="HAMAP-Rule" id="MF_03209"/>
    </source>
</evidence>
<evidence type="ECO:0000255" key="2">
    <source>
        <dbReference type="PROSITE-ProRule" id="PRU00041"/>
    </source>
</evidence>
<evidence type="ECO:0000256" key="3">
    <source>
        <dbReference type="SAM" id="MobiDB-lite"/>
    </source>
</evidence>
<evidence type="ECO:0000269" key="4">
    <source>
    </source>
</evidence>
<evidence type="ECO:0000269" key="5">
    <source>
    </source>
</evidence>
<evidence type="ECO:0000303" key="6">
    <source>
    </source>
</evidence>
<evidence type="ECO:0000305" key="7"/>
<evidence type="ECO:0000312" key="8">
    <source>
        <dbReference type="PomBase" id="SPAC31G5.15"/>
    </source>
</evidence>
<gene>
    <name evidence="6" type="primary">psd3</name>
    <name evidence="8" type="ORF">SPAC31G5.15</name>
</gene>
<keyword id="KW-0106">Calcium</keyword>
<keyword id="KW-0963">Cytoplasm</keyword>
<keyword id="KW-0210">Decarboxylase</keyword>
<keyword id="KW-0967">Endosome</keyword>
<keyword id="KW-0333">Golgi apparatus</keyword>
<keyword id="KW-0444">Lipid biosynthesis</keyword>
<keyword id="KW-0443">Lipid metabolism</keyword>
<keyword id="KW-0456">Lyase</keyword>
<keyword id="KW-0472">Membrane</keyword>
<keyword id="KW-0479">Metal-binding</keyword>
<keyword id="KW-0594">Phospholipid biosynthesis</keyword>
<keyword id="KW-1208">Phospholipid metabolism</keyword>
<keyword id="KW-0670">Pyruvate</keyword>
<keyword id="KW-1185">Reference proteome</keyword>
<keyword id="KW-0865">Zymogen</keyword>
<organism>
    <name type="scientific">Schizosaccharomyces pombe (strain 972 / ATCC 24843)</name>
    <name type="common">Fission yeast</name>
    <dbReference type="NCBI Taxonomy" id="284812"/>
    <lineage>
        <taxon>Eukaryota</taxon>
        <taxon>Fungi</taxon>
        <taxon>Dikarya</taxon>
        <taxon>Ascomycota</taxon>
        <taxon>Taphrinomycotina</taxon>
        <taxon>Schizosaccharomycetes</taxon>
        <taxon>Schizosaccharomycetales</taxon>
        <taxon>Schizosaccharomycetaceae</taxon>
        <taxon>Schizosaccharomyces</taxon>
    </lineage>
</organism>
<comment type="function">
    <text evidence="1 5">Catalyzes the formation of phosphatidylethanolamine (PtdEtn) from phosphatidylserine (PtdSer). Plays a central role in phospholipid metabolism and in the interorganelle trafficking of phosphatidylserine (By similarity). Together with psd1 and psd2, responsible for the majority of phosphatidylethanolamine synthesis (PubMed:19286980).</text>
</comment>
<comment type="catalytic activity">
    <reaction evidence="1">
        <text>a 1,2-diacyl-sn-glycero-3-phospho-L-serine + H(+) = a 1,2-diacyl-sn-glycero-3-phosphoethanolamine + CO2</text>
        <dbReference type="Rhea" id="RHEA:20828"/>
        <dbReference type="ChEBI" id="CHEBI:15378"/>
        <dbReference type="ChEBI" id="CHEBI:16526"/>
        <dbReference type="ChEBI" id="CHEBI:57262"/>
        <dbReference type="ChEBI" id="CHEBI:64612"/>
        <dbReference type="EC" id="4.1.1.65"/>
    </reaction>
</comment>
<comment type="cofactor">
    <cofactor evidence="1">
        <name>pyruvate</name>
        <dbReference type="ChEBI" id="CHEBI:15361"/>
    </cofactor>
    <text evidence="1">Binds 1 pyruvoyl group covalently per subunit.</text>
</comment>
<comment type="cofactor">
    <cofactor evidence="2">
        <name>Ca(2+)</name>
        <dbReference type="ChEBI" id="CHEBI:29108"/>
    </cofactor>
</comment>
<comment type="pathway">
    <text evidence="1">Phospholipid metabolism; phosphatidylethanolamine biosynthesis; phosphatidylethanolamine from CDP-diacylglycerol: step 2/2.</text>
</comment>
<comment type="subunit">
    <text evidence="1">Heterodimer of a large membrane-associated beta subunit and a small pyruvoyl-containing alpha subunit.</text>
</comment>
<comment type="subcellular location">
    <subcellularLocation>
        <location evidence="1">Golgi apparatus membrane</location>
        <topology evidence="1">Peripheral membrane protein</topology>
        <orientation evidence="1">Cytoplasmic side</orientation>
    </subcellularLocation>
    <subcellularLocation>
        <location evidence="1">Endosome membrane</location>
        <topology evidence="1">Peripheral membrane protein</topology>
        <orientation evidence="1">Cytoplasmic side</orientation>
    </subcellularLocation>
    <subcellularLocation>
        <location evidence="4">Cytoplasm</location>
    </subcellularLocation>
    <text evidence="4">Localizes at the barrier septum.</text>
</comment>
<comment type="domain">
    <text evidence="1">The C2 domains have an essential, but non-catalytic function. They may facilitate interactions with other proteins and are required for lipid transport function.</text>
</comment>
<comment type="PTM">
    <text evidence="1">Is synthesized initially as an inactive proenzyme. Formation of the active enzyme involves a self-maturation process in which the active site pyruvoyl group is generated from an internal serine residue via an autocatalytic post-translational modification. Two non-identical subunits are generated from the proenzyme in this reaction, and the pyruvate is formed at the N-terminus of the alpha chain, which is derived from the carboxyl end of the proenzyme. The autoendoproteolytic cleavage occurs by a canonical serine protease mechanism, in which the side chain hydroxyl group of the serine supplies its oxygen atom to form the C-terminus of the beta chain, while the remainder of the serine residue undergoes an oxidative deamination to produce ammonia and the pyruvoyl prosthetic group on the alpha chain. During this reaction, the Ser that is part of the protease active site of the proenzyme becomes the pyruvoyl prosthetic group, which constitutes an essential element of the active site of the mature decarboxylase.</text>
</comment>
<comment type="similarity">
    <text evidence="1">Belongs to the phosphatidylserine decarboxylase family. PSD-B subfamily. Eukaryotic type II sub-subfamily.</text>
</comment>
<protein>
    <recommendedName>
        <fullName evidence="6">Phosphatidylserine decarboxylase proenzyme 3</fullName>
        <ecNumber evidence="1">4.1.1.65</ecNumber>
    </recommendedName>
    <component>
        <recommendedName>
            <fullName evidence="7">Phosphatidylserine decarboxylase 3 beta chain</fullName>
        </recommendedName>
    </component>
    <component>
        <recommendedName>
            <fullName evidence="7">Phosphatidylserine decarboxylase 3 alpha chain</fullName>
        </recommendedName>
    </component>
</protein>
<dbReference type="EC" id="4.1.1.65" evidence="1"/>
<dbReference type="EMBL" id="CU329670">
    <property type="protein sequence ID" value="CAB11699.2"/>
    <property type="molecule type" value="Genomic_DNA"/>
</dbReference>
<dbReference type="PIR" id="T38632">
    <property type="entry name" value="T38632"/>
</dbReference>
<dbReference type="RefSeq" id="NP_594016.2">
    <property type="nucleotide sequence ID" value="NM_001019442.2"/>
</dbReference>
<dbReference type="SMR" id="O14111"/>
<dbReference type="BioGRID" id="279608">
    <property type="interactions" value="11"/>
</dbReference>
<dbReference type="FunCoup" id="O14111">
    <property type="interactions" value="78"/>
</dbReference>
<dbReference type="STRING" id="284812.O14111"/>
<dbReference type="iPTMnet" id="O14111"/>
<dbReference type="PaxDb" id="4896-SPAC31G5.15.1"/>
<dbReference type="EnsemblFungi" id="SPAC31G5.15.1">
    <property type="protein sequence ID" value="SPAC31G5.15.1:pep"/>
    <property type="gene ID" value="SPAC31G5.15"/>
</dbReference>
<dbReference type="GeneID" id="2543178"/>
<dbReference type="KEGG" id="spo:2543178"/>
<dbReference type="PomBase" id="SPAC31G5.15">
    <property type="gene designation" value="psd3"/>
</dbReference>
<dbReference type="VEuPathDB" id="FungiDB:SPAC31G5.15"/>
<dbReference type="eggNOG" id="KOG2419">
    <property type="taxonomic scope" value="Eukaryota"/>
</dbReference>
<dbReference type="HOGENOM" id="CLU_002661_0_0_1"/>
<dbReference type="InParanoid" id="O14111"/>
<dbReference type="OMA" id="TCASRDW"/>
<dbReference type="UniPathway" id="UPA00558">
    <property type="reaction ID" value="UER00616"/>
</dbReference>
<dbReference type="PRO" id="PR:O14111"/>
<dbReference type="Proteomes" id="UP000002485">
    <property type="component" value="Chromosome I"/>
</dbReference>
<dbReference type="GO" id="GO:0032153">
    <property type="term" value="C:cell division site"/>
    <property type="evidence" value="ECO:0007005"/>
    <property type="project" value="PomBase"/>
</dbReference>
<dbReference type="GO" id="GO:0005829">
    <property type="term" value="C:cytosol"/>
    <property type="evidence" value="ECO:0007005"/>
    <property type="project" value="PomBase"/>
</dbReference>
<dbReference type="GO" id="GO:0010008">
    <property type="term" value="C:endosome membrane"/>
    <property type="evidence" value="ECO:0007669"/>
    <property type="project" value="UniProtKB-SubCell"/>
</dbReference>
<dbReference type="GO" id="GO:0000329">
    <property type="term" value="C:fungal-type vacuole membrane"/>
    <property type="evidence" value="ECO:0000250"/>
    <property type="project" value="PomBase"/>
</dbReference>
<dbReference type="GO" id="GO:0000139">
    <property type="term" value="C:Golgi membrane"/>
    <property type="evidence" value="ECO:0000250"/>
    <property type="project" value="PomBase"/>
</dbReference>
<dbReference type="GO" id="GO:0005795">
    <property type="term" value="C:Golgi stack"/>
    <property type="evidence" value="ECO:0007669"/>
    <property type="project" value="UniProtKB-UniRule"/>
</dbReference>
<dbReference type="GO" id="GO:0046872">
    <property type="term" value="F:metal ion binding"/>
    <property type="evidence" value="ECO:0007669"/>
    <property type="project" value="UniProtKB-KW"/>
</dbReference>
<dbReference type="GO" id="GO:0004609">
    <property type="term" value="F:phosphatidylserine decarboxylase activity"/>
    <property type="evidence" value="ECO:0000315"/>
    <property type="project" value="PomBase"/>
</dbReference>
<dbReference type="GO" id="GO:0005543">
    <property type="term" value="F:phospholipid binding"/>
    <property type="evidence" value="ECO:0000255"/>
    <property type="project" value="PomBase"/>
</dbReference>
<dbReference type="GO" id="GO:0006656">
    <property type="term" value="P:phosphatidylcholine biosynthetic process"/>
    <property type="evidence" value="ECO:0000250"/>
    <property type="project" value="PomBase"/>
</dbReference>
<dbReference type="GO" id="GO:0006646">
    <property type="term" value="P:phosphatidylethanolamine biosynthetic process"/>
    <property type="evidence" value="ECO:0000315"/>
    <property type="project" value="PomBase"/>
</dbReference>
<dbReference type="GO" id="GO:0016540">
    <property type="term" value="P:protein autoprocessing"/>
    <property type="evidence" value="ECO:0007669"/>
    <property type="project" value="UniProtKB-UniRule"/>
</dbReference>
<dbReference type="CDD" id="cd04039">
    <property type="entry name" value="C2_PSD"/>
    <property type="match status" value="1"/>
</dbReference>
<dbReference type="Gene3D" id="2.60.40.150">
    <property type="entry name" value="C2 domain"/>
    <property type="match status" value="1"/>
</dbReference>
<dbReference type="HAMAP" id="MF_00663">
    <property type="entry name" value="PS_decarb_PSD_B_type2"/>
    <property type="match status" value="1"/>
</dbReference>
<dbReference type="InterPro" id="IPR000008">
    <property type="entry name" value="C2_dom"/>
</dbReference>
<dbReference type="InterPro" id="IPR035892">
    <property type="entry name" value="C2_domain_sf"/>
</dbReference>
<dbReference type="InterPro" id="IPR003817">
    <property type="entry name" value="PS_Dcarbxylase"/>
</dbReference>
<dbReference type="InterPro" id="IPR033177">
    <property type="entry name" value="PSD-B"/>
</dbReference>
<dbReference type="InterPro" id="IPR033179">
    <property type="entry name" value="PSD_type2_pro"/>
</dbReference>
<dbReference type="NCBIfam" id="TIGR00163">
    <property type="entry name" value="PS_decarb"/>
    <property type="match status" value="1"/>
</dbReference>
<dbReference type="PANTHER" id="PTHR10067">
    <property type="entry name" value="PHOSPHATIDYLSERINE DECARBOXYLASE"/>
    <property type="match status" value="1"/>
</dbReference>
<dbReference type="PANTHER" id="PTHR10067:SF17">
    <property type="entry name" value="PHOSPHATIDYLSERINE DECARBOXYLASE PROENZYME 2"/>
    <property type="match status" value="1"/>
</dbReference>
<dbReference type="Pfam" id="PF00168">
    <property type="entry name" value="C2"/>
    <property type="match status" value="1"/>
</dbReference>
<dbReference type="Pfam" id="PF02666">
    <property type="entry name" value="PS_Dcarbxylase"/>
    <property type="match status" value="1"/>
</dbReference>
<dbReference type="SMART" id="SM00239">
    <property type="entry name" value="C2"/>
    <property type="match status" value="1"/>
</dbReference>
<dbReference type="SUPFAM" id="SSF49562">
    <property type="entry name" value="C2 domain (Calcium/lipid-binding domain, CaLB)"/>
    <property type="match status" value="1"/>
</dbReference>
<dbReference type="PROSITE" id="PS50004">
    <property type="entry name" value="C2"/>
    <property type="match status" value="1"/>
</dbReference>
<feature type="chain" id="PRO_0000303954" description="Phosphatidylserine decarboxylase proenzyme 3">
    <location>
        <begin position="1"/>
        <end position="967"/>
    </location>
</feature>
<feature type="chain" id="PRO_0000416837" description="Phosphatidylserine decarboxylase 3 beta chain" evidence="7">
    <location>
        <begin position="1"/>
        <end position="911"/>
    </location>
</feature>
<feature type="chain" id="PRO_0000416838" description="Phosphatidylserine decarboxylase 3 alpha chain" evidence="7">
    <location>
        <begin position="912"/>
        <end position="967"/>
    </location>
</feature>
<feature type="domain" description="C2" evidence="2">
    <location>
        <begin position="250"/>
        <end position="373"/>
    </location>
</feature>
<feature type="region of interest" description="Disordered" evidence="3">
    <location>
        <begin position="217"/>
        <end position="255"/>
    </location>
</feature>
<feature type="region of interest" description="Disordered" evidence="3">
    <location>
        <begin position="532"/>
        <end position="566"/>
    </location>
</feature>
<feature type="region of interest" description="Disordered" evidence="3">
    <location>
        <begin position="947"/>
        <end position="967"/>
    </location>
</feature>
<feature type="compositionally biased region" description="Low complexity" evidence="3">
    <location>
        <begin position="220"/>
        <end position="237"/>
    </location>
</feature>
<feature type="compositionally biased region" description="Low complexity" evidence="3">
    <location>
        <begin position="532"/>
        <end position="544"/>
    </location>
</feature>
<feature type="compositionally biased region" description="Polar residues" evidence="3">
    <location>
        <begin position="545"/>
        <end position="558"/>
    </location>
</feature>
<feature type="active site" description="Charge relay system; for autoendoproteolytic cleavage activity" evidence="1">
    <location>
        <position position="769"/>
    </location>
</feature>
<feature type="active site" description="Charge relay system; for autoendoproteolytic cleavage activity" evidence="1">
    <location>
        <position position="825"/>
    </location>
</feature>
<feature type="active site" description="Charge relay system; for autoendoproteolytic cleavage activity" evidence="1">
    <location>
        <position position="912"/>
    </location>
</feature>
<feature type="active site" description="Schiff-base intermediate with substrate; via pyruvic acid; for decarboxylase activity" evidence="1">
    <location>
        <position position="912"/>
    </location>
</feature>
<feature type="binding site" evidence="2">
    <location>
        <position position="343"/>
    </location>
    <ligand>
        <name>Ca(2+)</name>
        <dbReference type="ChEBI" id="CHEBI:29108"/>
    </ligand>
</feature>
<feature type="binding site" evidence="2">
    <location>
        <position position="346"/>
    </location>
    <ligand>
        <name>Ca(2+)</name>
        <dbReference type="ChEBI" id="CHEBI:29108"/>
    </ligand>
</feature>
<feature type="binding site" evidence="2">
    <location>
        <position position="349"/>
    </location>
    <ligand>
        <name>Ca(2+)</name>
        <dbReference type="ChEBI" id="CHEBI:29108"/>
    </ligand>
</feature>
<feature type="site" description="Cleavage (non-hydrolytic); by autocatalysis" evidence="1">
    <location>
        <begin position="911"/>
        <end position="912"/>
    </location>
</feature>
<feature type="modified residue" description="Pyruvic acid (Ser); by autocatalysis" evidence="1">
    <location>
        <position position="912"/>
    </location>
</feature>
<proteinExistence type="inferred from homology"/>
<accession>O14111</accession>
<sequence>MPFTKSCRSANTLRKGIKNGKLILKIIVNDIDNVESCLSGDESNDSKKSSASFYMKLKYGSYRALADNILSTDENRKEDIAVFDVPLPNGLQIDTFTLCLYRKSKWKKQIVGEAYIGIQALLLSTNPDETCKYPVISPPSGRNKENQSPSHQICNLSLKWIIYDPEDADADSKTLAKAWLQQIKMNQTSIDPMSNISKSLKELEVDNVESDLEDSSFIAEPDSSIPPSESSVSISTDTGKETPPSKSKKSSNQPYVSIGEGNSDLLGFVFLEIISVSNLPPLKNVFRTGFDMDPFVITAFSKNIFRTKWLRHNLNPVYNEKFLFEVGAFESNYDLVFKVVDHDKMSLNDSIAVGSFNVQSIINSSAQVDPETGLYSFNIETSSPSQDTSSKAEDSPTVQKIADDFSSAVGKDLRTDIIEQIIPLTLCCKHDFSTPRDVKLSFKAMFFPIAALRQKFWRVMLAQYGDIEDGHIGKLGMYAVLDTLGSNIPNSMVDDIYTELSSKNHDDTSDSITVDEAVICLERLVDLVCHQDQQATQTPQSPSSNEESGPGTPTQTSDQYEDSEDSRNFPSKLYLVYLSNCPLCLKFKLSKVNQQKATVHLATCASHDWKRVDRLMMTSYVSLNQAQRRWFSKAFAKVVYGSSKVGSTSATTLVQNRQTGQIQEEKMNAYVRIGIRLLYRGIRNRRIEGSKVKKILRSLTLKQGMKYDSPISVKEIKPFIRFFDLNMNEVDMPVGGFKTFNEFFYRKLKPGSRPCAFPDNPDILVSPADSRIVAYECIEKATTYWIKGTEFTVERLLGYSNEAQRFVGGSICISRLAPQDYHRFHSPVNGCIGPITKIEGQYYTVNPMAIRSYLDVFGENVRVLIPIDSNEFGKVMLVAVGAMMVGSTVLTVDEGKIVQRSDELGYFKFGGSTVITLFEPNVTSFDEDLLRNSKTKIETLVKMGERIGQKIDPNKPTDAEDHSKSDS</sequence>
<name>PSD3_SCHPO</name>
<reference key="1">
    <citation type="journal article" date="2002" name="Nature">
        <title>The genome sequence of Schizosaccharomyces pombe.</title>
        <authorList>
            <person name="Wood V."/>
            <person name="Gwilliam R."/>
            <person name="Rajandream M.A."/>
            <person name="Lyne M.H."/>
            <person name="Lyne R."/>
            <person name="Stewart A."/>
            <person name="Sgouros J.G."/>
            <person name="Peat N."/>
            <person name="Hayles J."/>
            <person name="Baker S.G."/>
            <person name="Basham D."/>
            <person name="Bowman S."/>
            <person name="Brooks K."/>
            <person name="Brown D."/>
            <person name="Brown S."/>
            <person name="Chillingworth T."/>
            <person name="Churcher C.M."/>
            <person name="Collins M."/>
            <person name="Connor R."/>
            <person name="Cronin A."/>
            <person name="Davis P."/>
            <person name="Feltwell T."/>
            <person name="Fraser A."/>
            <person name="Gentles S."/>
            <person name="Goble A."/>
            <person name="Hamlin N."/>
            <person name="Harris D.E."/>
            <person name="Hidalgo J."/>
            <person name="Hodgson G."/>
            <person name="Holroyd S."/>
            <person name="Hornsby T."/>
            <person name="Howarth S."/>
            <person name="Huckle E.J."/>
            <person name="Hunt S."/>
            <person name="Jagels K."/>
            <person name="James K.D."/>
            <person name="Jones L."/>
            <person name="Jones M."/>
            <person name="Leather S."/>
            <person name="McDonald S."/>
            <person name="McLean J."/>
            <person name="Mooney P."/>
            <person name="Moule S."/>
            <person name="Mungall K.L."/>
            <person name="Murphy L.D."/>
            <person name="Niblett D."/>
            <person name="Odell C."/>
            <person name="Oliver K."/>
            <person name="O'Neil S."/>
            <person name="Pearson D."/>
            <person name="Quail M.A."/>
            <person name="Rabbinowitsch E."/>
            <person name="Rutherford K.M."/>
            <person name="Rutter S."/>
            <person name="Saunders D."/>
            <person name="Seeger K."/>
            <person name="Sharp S."/>
            <person name="Skelton J."/>
            <person name="Simmonds M.N."/>
            <person name="Squares R."/>
            <person name="Squares S."/>
            <person name="Stevens K."/>
            <person name="Taylor K."/>
            <person name="Taylor R.G."/>
            <person name="Tivey A."/>
            <person name="Walsh S.V."/>
            <person name="Warren T."/>
            <person name="Whitehead S."/>
            <person name="Woodward J.R."/>
            <person name="Volckaert G."/>
            <person name="Aert R."/>
            <person name="Robben J."/>
            <person name="Grymonprez B."/>
            <person name="Weltjens I."/>
            <person name="Vanstreels E."/>
            <person name="Rieger M."/>
            <person name="Schaefer M."/>
            <person name="Mueller-Auer S."/>
            <person name="Gabel C."/>
            <person name="Fuchs M."/>
            <person name="Duesterhoeft A."/>
            <person name="Fritzc C."/>
            <person name="Holzer E."/>
            <person name="Moestl D."/>
            <person name="Hilbert H."/>
            <person name="Borzym K."/>
            <person name="Langer I."/>
            <person name="Beck A."/>
            <person name="Lehrach H."/>
            <person name="Reinhardt R."/>
            <person name="Pohl T.M."/>
            <person name="Eger P."/>
            <person name="Zimmermann W."/>
            <person name="Wedler H."/>
            <person name="Wambutt R."/>
            <person name="Purnelle B."/>
            <person name="Goffeau A."/>
            <person name="Cadieu E."/>
            <person name="Dreano S."/>
            <person name="Gloux S."/>
            <person name="Lelaure V."/>
            <person name="Mottier S."/>
            <person name="Galibert F."/>
            <person name="Aves S.J."/>
            <person name="Xiang Z."/>
            <person name="Hunt C."/>
            <person name="Moore K."/>
            <person name="Hurst S.M."/>
            <person name="Lucas M."/>
            <person name="Rochet M."/>
            <person name="Gaillardin C."/>
            <person name="Tallada V.A."/>
            <person name="Garzon A."/>
            <person name="Thode G."/>
            <person name="Daga R.R."/>
            <person name="Cruzado L."/>
            <person name="Jimenez J."/>
            <person name="Sanchez M."/>
            <person name="del Rey F."/>
            <person name="Benito J."/>
            <person name="Dominguez A."/>
            <person name="Revuelta J.L."/>
            <person name="Moreno S."/>
            <person name="Armstrong J."/>
            <person name="Forsburg S.L."/>
            <person name="Cerutti L."/>
            <person name="Lowe T."/>
            <person name="McCombie W.R."/>
            <person name="Paulsen I."/>
            <person name="Potashkin J."/>
            <person name="Shpakovski G.V."/>
            <person name="Ussery D."/>
            <person name="Barrell B.G."/>
            <person name="Nurse P."/>
        </authorList>
    </citation>
    <scope>NUCLEOTIDE SEQUENCE [LARGE SCALE GENOMIC DNA]</scope>
    <source>
        <strain>972 / ATCC 24843</strain>
    </source>
</reference>
<reference key="2">
    <citation type="journal article" date="2011" name="Science">
        <title>Comparative functional genomics of the fission yeasts.</title>
        <authorList>
            <person name="Rhind N."/>
            <person name="Chen Z."/>
            <person name="Yassour M."/>
            <person name="Thompson D.A."/>
            <person name="Haas B.J."/>
            <person name="Habib N."/>
            <person name="Wapinski I."/>
            <person name="Roy S."/>
            <person name="Lin M.F."/>
            <person name="Heiman D.I."/>
            <person name="Young S.K."/>
            <person name="Furuya K."/>
            <person name="Guo Y."/>
            <person name="Pidoux A."/>
            <person name="Chen H.M."/>
            <person name="Robbertse B."/>
            <person name="Goldberg J.M."/>
            <person name="Aoki K."/>
            <person name="Bayne E.H."/>
            <person name="Berlin A.M."/>
            <person name="Desjardins C.A."/>
            <person name="Dobbs E."/>
            <person name="Dukaj L."/>
            <person name="Fan L."/>
            <person name="FitzGerald M.G."/>
            <person name="French C."/>
            <person name="Gujja S."/>
            <person name="Hansen K."/>
            <person name="Keifenheim D."/>
            <person name="Levin J.Z."/>
            <person name="Mosher R.A."/>
            <person name="Mueller C.A."/>
            <person name="Pfiffner J."/>
            <person name="Priest M."/>
            <person name="Russ C."/>
            <person name="Smialowska A."/>
            <person name="Swoboda P."/>
            <person name="Sykes S.M."/>
            <person name="Vaughn M."/>
            <person name="Vengrova S."/>
            <person name="Yoder R."/>
            <person name="Zeng Q."/>
            <person name="Allshire R."/>
            <person name="Baulcombe D."/>
            <person name="Birren B.W."/>
            <person name="Brown W."/>
            <person name="Ekwall K."/>
            <person name="Kellis M."/>
            <person name="Leatherwood J."/>
            <person name="Levin H."/>
            <person name="Margalit H."/>
            <person name="Martienssen R."/>
            <person name="Nieduszynski C.A."/>
            <person name="Spatafora J.W."/>
            <person name="Friedman N."/>
            <person name="Dalgaard J.Z."/>
            <person name="Baumann P."/>
            <person name="Niki H."/>
            <person name="Regev A."/>
            <person name="Nusbaum C."/>
        </authorList>
    </citation>
    <scope>REVISION OF GENE MODEL</scope>
</reference>
<reference key="3">
    <citation type="journal article" date="2006" name="Nat. Biotechnol.">
        <title>ORFeome cloning and global analysis of protein localization in the fission yeast Schizosaccharomyces pombe.</title>
        <authorList>
            <person name="Matsuyama A."/>
            <person name="Arai R."/>
            <person name="Yashiroda Y."/>
            <person name="Shirai A."/>
            <person name="Kamata A."/>
            <person name="Sekido S."/>
            <person name="Kobayashi Y."/>
            <person name="Hashimoto A."/>
            <person name="Hamamoto M."/>
            <person name="Hiraoka Y."/>
            <person name="Horinouchi S."/>
            <person name="Yoshida M."/>
        </authorList>
    </citation>
    <scope>SUBCELLULAR LOCATION [LARGE SCALE ANALYSIS]</scope>
</reference>
<reference key="4">
    <citation type="journal article" date="2009" name="Eukaryot. Cell">
        <title>Phosphatidylethanolamine is required for normal cell morphology and cytokinesis in the fission yeast Schizosaccharomyces pombe.</title>
        <authorList>
            <person name="Luo J."/>
            <person name="Matsuo Y."/>
            <person name="Gulis G."/>
            <person name="Hinz H."/>
            <person name="Patton-Vogt J."/>
            <person name="Marcus S."/>
        </authorList>
    </citation>
    <scope>FUNCTION</scope>
</reference>